<gene>
    <name type="primary">slc12a9</name>
    <name type="ORF">si:ch211-284e13.1</name>
</gene>
<proteinExistence type="inferred from homology"/>
<organism>
    <name type="scientific">Danio rerio</name>
    <name type="common">Zebrafish</name>
    <name type="synonym">Brachydanio rerio</name>
    <dbReference type="NCBI Taxonomy" id="7955"/>
    <lineage>
        <taxon>Eukaryota</taxon>
        <taxon>Metazoa</taxon>
        <taxon>Chordata</taxon>
        <taxon>Craniata</taxon>
        <taxon>Vertebrata</taxon>
        <taxon>Euteleostomi</taxon>
        <taxon>Actinopterygii</taxon>
        <taxon>Neopterygii</taxon>
        <taxon>Teleostei</taxon>
        <taxon>Ostariophysi</taxon>
        <taxon>Cypriniformes</taxon>
        <taxon>Danionidae</taxon>
        <taxon>Danioninae</taxon>
        <taxon>Danio</taxon>
    </lineage>
</organism>
<evidence type="ECO:0000250" key="1">
    <source>
        <dbReference type="UniProtKB" id="Q0VGW6"/>
    </source>
</evidence>
<evidence type="ECO:0000250" key="2">
    <source>
        <dbReference type="UniProtKB" id="Q9BXP2"/>
    </source>
</evidence>
<evidence type="ECO:0000255" key="3"/>
<evidence type="ECO:0000305" key="4"/>
<accession>A2BFP5</accession>
<dbReference type="EMBL" id="CT025690">
    <property type="protein sequence ID" value="CAM14083.1"/>
    <property type="molecule type" value="Genomic_DNA"/>
</dbReference>
<dbReference type="EMBL" id="BX294181">
    <property type="protein sequence ID" value="CAM14083.1"/>
    <property type="status" value="JOINED"/>
    <property type="molecule type" value="Genomic_DNA"/>
</dbReference>
<dbReference type="EMBL" id="BX294181">
    <property type="protein sequence ID" value="CAM14224.1"/>
    <property type="molecule type" value="Genomic_DNA"/>
</dbReference>
<dbReference type="EMBL" id="CT025690">
    <property type="protein sequence ID" value="CAM14224.1"/>
    <property type="status" value="JOINED"/>
    <property type="molecule type" value="Genomic_DNA"/>
</dbReference>
<dbReference type="RefSeq" id="NP_001122020.1">
    <property type="nucleotide sequence ID" value="NM_001128548.1"/>
</dbReference>
<dbReference type="RefSeq" id="XP_005165422.1">
    <property type="nucleotide sequence ID" value="XM_005165365.3"/>
</dbReference>
<dbReference type="RefSeq" id="XP_017211661.1">
    <property type="nucleotide sequence ID" value="XM_017356172.1"/>
</dbReference>
<dbReference type="RefSeq" id="XP_021331993.1">
    <property type="nucleotide sequence ID" value="XM_021476318.2"/>
</dbReference>
<dbReference type="SMR" id="A2BFP5"/>
<dbReference type="FunCoup" id="A2BFP5">
    <property type="interactions" value="1084"/>
</dbReference>
<dbReference type="STRING" id="7955.ENSDARP00000120278"/>
<dbReference type="GlyCosmos" id="A2BFP5">
    <property type="glycosylation" value="3 sites, No reported glycans"/>
</dbReference>
<dbReference type="PaxDb" id="7955-ENSDARP00000120278"/>
<dbReference type="PeptideAtlas" id="A2BFP5"/>
<dbReference type="Ensembl" id="ENSDART00000084917">
    <property type="protein sequence ID" value="ENSDARP00000079352"/>
    <property type="gene ID" value="ENSDARG00000060366"/>
</dbReference>
<dbReference type="Ensembl" id="ENSDART00000139479">
    <property type="protein sequence ID" value="ENSDARP00000120278"/>
    <property type="gene ID" value="ENSDARG00000060366"/>
</dbReference>
<dbReference type="GeneID" id="793341"/>
<dbReference type="KEGG" id="dre:793341"/>
<dbReference type="AGR" id="ZFIN:ZDB-GENE-050208-222"/>
<dbReference type="CTD" id="56996"/>
<dbReference type="ZFIN" id="ZDB-GENE-050208-222">
    <property type="gene designation" value="slc12a9"/>
</dbReference>
<dbReference type="eggNOG" id="KOG1288">
    <property type="taxonomic scope" value="Eukaryota"/>
</dbReference>
<dbReference type="HOGENOM" id="CLU_001883_3_0_1"/>
<dbReference type="InParanoid" id="A2BFP5"/>
<dbReference type="OMA" id="NIKYWRP"/>
<dbReference type="OrthoDB" id="2020542at2759"/>
<dbReference type="PhylomeDB" id="A2BFP5"/>
<dbReference type="TreeFam" id="TF313191"/>
<dbReference type="PRO" id="PR:A2BFP5"/>
<dbReference type="Proteomes" id="UP000000437">
    <property type="component" value="Alternate scaffold 5"/>
</dbReference>
<dbReference type="Proteomes" id="UP000000437">
    <property type="component" value="Chromosome 5"/>
</dbReference>
<dbReference type="Bgee" id="ENSDARG00000060366">
    <property type="expression patterns" value="Expressed in mesonephros and 22 other cell types or tissues"/>
</dbReference>
<dbReference type="GO" id="GO:0005765">
    <property type="term" value="C:lysosomal membrane"/>
    <property type="evidence" value="ECO:0007669"/>
    <property type="project" value="UniProtKB-SubCell"/>
</dbReference>
<dbReference type="GO" id="GO:0005886">
    <property type="term" value="C:plasma membrane"/>
    <property type="evidence" value="ECO:0007669"/>
    <property type="project" value="UniProtKB-SubCell"/>
</dbReference>
<dbReference type="GO" id="GO:0015379">
    <property type="term" value="F:potassium:chloride symporter activity"/>
    <property type="evidence" value="ECO:0000318"/>
    <property type="project" value="GO_Central"/>
</dbReference>
<dbReference type="GO" id="GO:0006884">
    <property type="term" value="P:cell volume homeostasis"/>
    <property type="evidence" value="ECO:0000318"/>
    <property type="project" value="GO_Central"/>
</dbReference>
<dbReference type="GO" id="GO:0055064">
    <property type="term" value="P:chloride ion homeostasis"/>
    <property type="evidence" value="ECO:0000318"/>
    <property type="project" value="GO_Central"/>
</dbReference>
<dbReference type="GO" id="GO:1902476">
    <property type="term" value="P:chloride transmembrane transport"/>
    <property type="evidence" value="ECO:0000318"/>
    <property type="project" value="GO_Central"/>
</dbReference>
<dbReference type="GO" id="GO:0055075">
    <property type="term" value="P:potassium ion homeostasis"/>
    <property type="evidence" value="ECO:0000318"/>
    <property type="project" value="GO_Central"/>
</dbReference>
<dbReference type="FunFam" id="1.20.1740.10:FF:000013">
    <property type="entry name" value="Solute carrier family 12 member"/>
    <property type="match status" value="1"/>
</dbReference>
<dbReference type="Gene3D" id="1.20.1740.10">
    <property type="entry name" value="Amino acid/polyamine transporter I"/>
    <property type="match status" value="1"/>
</dbReference>
<dbReference type="InterPro" id="IPR004841">
    <property type="entry name" value="AA-permease/SLC12A_dom"/>
</dbReference>
<dbReference type="InterPro" id="IPR018491">
    <property type="entry name" value="SLC12_C"/>
</dbReference>
<dbReference type="InterPro" id="IPR004842">
    <property type="entry name" value="SLC12A_fam"/>
</dbReference>
<dbReference type="PANTHER" id="PTHR11827:SF98">
    <property type="entry name" value="SOLUTE CARRIER FAMILY 12 MEMBER 9"/>
    <property type="match status" value="1"/>
</dbReference>
<dbReference type="PANTHER" id="PTHR11827">
    <property type="entry name" value="SOLUTE CARRIER FAMILY 12, CATION COTRANSPORTERS"/>
    <property type="match status" value="1"/>
</dbReference>
<dbReference type="Pfam" id="PF00324">
    <property type="entry name" value="AA_permease"/>
    <property type="match status" value="1"/>
</dbReference>
<dbReference type="Pfam" id="PF03522">
    <property type="entry name" value="SLC12"/>
    <property type="match status" value="1"/>
</dbReference>
<keyword id="KW-1003">Cell membrane</keyword>
<keyword id="KW-0325">Glycoprotein</keyword>
<keyword id="KW-0458">Lysosome</keyword>
<keyword id="KW-0472">Membrane</keyword>
<keyword id="KW-1185">Reference proteome</keyword>
<keyword id="KW-0812">Transmembrane</keyword>
<keyword id="KW-1133">Transmembrane helix</keyword>
<keyword id="KW-0813">Transport</keyword>
<comment type="function">
    <text evidence="1 2">Seems to correspond to a subunit of a multimeric transport system and thus, additional subunits may be required for its function (By similarity). May play a role in lysosomal ion flux and osmoregulation (By similarity).</text>
</comment>
<comment type="subcellular location">
    <subcellularLocation>
        <location evidence="1">Cell membrane</location>
        <topology evidence="1">Multi-pass membrane protein</topology>
    </subcellularLocation>
    <subcellularLocation>
        <location evidence="2">Lysosome membrane</location>
    </subcellularLocation>
</comment>
<comment type="similarity">
    <text evidence="4">Belongs to the SLC12A transporter family.</text>
</comment>
<protein>
    <recommendedName>
        <fullName>Solute carrier family 12 member 9</fullName>
    </recommendedName>
</protein>
<name>S12A9_DANRE</name>
<sequence length="899" mass="98476">MANEHSPLLVHGVYSMMGNAEDSRGGSAGTGEASNPKTDPRKLNTFFGVMVPTILSMFSIVLFLRTGFVVGHAGLLHGLLMLFVAYFIISLTILSICAISTNGAVEGGGAYFMISRSLGPEFGGSIGLMFYLAKVCACGVYVLGLVEAIMDVFGQDPGSSVAQGLRVLPQGYWYTVLYSSVVLLLCMLVCLVGAHIYAKASFLILLVVTVSLISIIISPLIVSPQGFNITHTYGNNHSVTVSPSYTGFNSTTLKNNLGPRYSLDYSTNTMMSFATVFAVMFTSCTGIMAGANMSGELKNPSESIPKGTIMAVAYTFTVYVLLYLLLSSTCDRSLLLNDYAVFQRVNVWPPFVTIGVYCASLSAAMCSMIGASRILHALALDQLFGLPLAPAAVTSSSGNPWVSVLYTWALVQCTLFAGQLNVIAGIVTVFYLLAYAAVDLACLALEWASAPNFRPTFQFFSWHTCLLGIISCVVMMFVINPVYSSASIVLLLLLLLFLHYRSPTSSWGYISQALIFHQVRKYLLMLDSRKDHVKFWRPQVLLMVSNPRSSCQLICFVNQLKKGGLFVLGHVQIGDLDVLPADPVQPQYNFWLSLVDKLGVKAFVDLTLSPSVRQGTQHLLRITGLGGMKPNTLVLGFYDNSYPEDYFLQDPVFCKGDRSEGDNFGVDLPSLQAHFPPVRHAESPRALQPQEYVSIIQDAIKMGKNICLARYFFQLPPESKGATYMWGKDSMDTIDVWPTNLLTPGSASYADVGSLFLLQMACVLNMASGWRRARLRIFVCVESESEDQGWLAKEEQFRELLGKLRIRAAIKIVAWDNVARMVRGPNTESQPVSEDFLCAVNGLLKEHSSTAAVRFLYLPDPPSSCELSQQYLTQLDTLTRDLGPTLLIHGVTPVTCTEL</sequence>
<reference key="1">
    <citation type="journal article" date="2013" name="Nature">
        <title>The zebrafish reference genome sequence and its relationship to the human genome.</title>
        <authorList>
            <person name="Howe K."/>
            <person name="Clark M.D."/>
            <person name="Torroja C.F."/>
            <person name="Torrance J."/>
            <person name="Berthelot C."/>
            <person name="Muffato M."/>
            <person name="Collins J.E."/>
            <person name="Humphray S."/>
            <person name="McLaren K."/>
            <person name="Matthews L."/>
            <person name="McLaren S."/>
            <person name="Sealy I."/>
            <person name="Caccamo M."/>
            <person name="Churcher C."/>
            <person name="Scott C."/>
            <person name="Barrett J.C."/>
            <person name="Koch R."/>
            <person name="Rauch G.J."/>
            <person name="White S."/>
            <person name="Chow W."/>
            <person name="Kilian B."/>
            <person name="Quintais L.T."/>
            <person name="Guerra-Assuncao J.A."/>
            <person name="Zhou Y."/>
            <person name="Gu Y."/>
            <person name="Yen J."/>
            <person name="Vogel J.H."/>
            <person name="Eyre T."/>
            <person name="Redmond S."/>
            <person name="Banerjee R."/>
            <person name="Chi J."/>
            <person name="Fu B."/>
            <person name="Langley E."/>
            <person name="Maguire S.F."/>
            <person name="Laird G.K."/>
            <person name="Lloyd D."/>
            <person name="Kenyon E."/>
            <person name="Donaldson S."/>
            <person name="Sehra H."/>
            <person name="Almeida-King J."/>
            <person name="Loveland J."/>
            <person name="Trevanion S."/>
            <person name="Jones M."/>
            <person name="Quail M."/>
            <person name="Willey D."/>
            <person name="Hunt A."/>
            <person name="Burton J."/>
            <person name="Sims S."/>
            <person name="McLay K."/>
            <person name="Plumb B."/>
            <person name="Davis J."/>
            <person name="Clee C."/>
            <person name="Oliver K."/>
            <person name="Clark R."/>
            <person name="Riddle C."/>
            <person name="Elliot D."/>
            <person name="Threadgold G."/>
            <person name="Harden G."/>
            <person name="Ware D."/>
            <person name="Begum S."/>
            <person name="Mortimore B."/>
            <person name="Kerry G."/>
            <person name="Heath P."/>
            <person name="Phillimore B."/>
            <person name="Tracey A."/>
            <person name="Corby N."/>
            <person name="Dunn M."/>
            <person name="Johnson C."/>
            <person name="Wood J."/>
            <person name="Clark S."/>
            <person name="Pelan S."/>
            <person name="Griffiths G."/>
            <person name="Smith M."/>
            <person name="Glithero R."/>
            <person name="Howden P."/>
            <person name="Barker N."/>
            <person name="Lloyd C."/>
            <person name="Stevens C."/>
            <person name="Harley J."/>
            <person name="Holt K."/>
            <person name="Panagiotidis G."/>
            <person name="Lovell J."/>
            <person name="Beasley H."/>
            <person name="Henderson C."/>
            <person name="Gordon D."/>
            <person name="Auger K."/>
            <person name="Wright D."/>
            <person name="Collins J."/>
            <person name="Raisen C."/>
            <person name="Dyer L."/>
            <person name="Leung K."/>
            <person name="Robertson L."/>
            <person name="Ambridge K."/>
            <person name="Leongamornlert D."/>
            <person name="McGuire S."/>
            <person name="Gilderthorp R."/>
            <person name="Griffiths C."/>
            <person name="Manthravadi D."/>
            <person name="Nichol S."/>
            <person name="Barker G."/>
            <person name="Whitehead S."/>
            <person name="Kay M."/>
            <person name="Brown J."/>
            <person name="Murnane C."/>
            <person name="Gray E."/>
            <person name="Humphries M."/>
            <person name="Sycamore N."/>
            <person name="Barker D."/>
            <person name="Saunders D."/>
            <person name="Wallis J."/>
            <person name="Babbage A."/>
            <person name="Hammond S."/>
            <person name="Mashreghi-Mohammadi M."/>
            <person name="Barr L."/>
            <person name="Martin S."/>
            <person name="Wray P."/>
            <person name="Ellington A."/>
            <person name="Matthews N."/>
            <person name="Ellwood M."/>
            <person name="Woodmansey R."/>
            <person name="Clark G."/>
            <person name="Cooper J."/>
            <person name="Tromans A."/>
            <person name="Grafham D."/>
            <person name="Skuce C."/>
            <person name="Pandian R."/>
            <person name="Andrews R."/>
            <person name="Harrison E."/>
            <person name="Kimberley A."/>
            <person name="Garnett J."/>
            <person name="Fosker N."/>
            <person name="Hall R."/>
            <person name="Garner P."/>
            <person name="Kelly D."/>
            <person name="Bird C."/>
            <person name="Palmer S."/>
            <person name="Gehring I."/>
            <person name="Berger A."/>
            <person name="Dooley C.M."/>
            <person name="Ersan-Urun Z."/>
            <person name="Eser C."/>
            <person name="Geiger H."/>
            <person name="Geisler M."/>
            <person name="Karotki L."/>
            <person name="Kirn A."/>
            <person name="Konantz J."/>
            <person name="Konantz M."/>
            <person name="Oberlander M."/>
            <person name="Rudolph-Geiger S."/>
            <person name="Teucke M."/>
            <person name="Lanz C."/>
            <person name="Raddatz G."/>
            <person name="Osoegawa K."/>
            <person name="Zhu B."/>
            <person name="Rapp A."/>
            <person name="Widaa S."/>
            <person name="Langford C."/>
            <person name="Yang F."/>
            <person name="Schuster S.C."/>
            <person name="Carter N.P."/>
            <person name="Harrow J."/>
            <person name="Ning Z."/>
            <person name="Herrero J."/>
            <person name="Searle S.M."/>
            <person name="Enright A."/>
            <person name="Geisler R."/>
            <person name="Plasterk R.H."/>
            <person name="Lee C."/>
            <person name="Westerfield M."/>
            <person name="de Jong P.J."/>
            <person name="Zon L.I."/>
            <person name="Postlethwait J.H."/>
            <person name="Nusslein-Volhard C."/>
            <person name="Hubbard T.J."/>
            <person name="Roest Crollius H."/>
            <person name="Rogers J."/>
            <person name="Stemple D.L."/>
        </authorList>
    </citation>
    <scope>NUCLEOTIDE SEQUENCE [LARGE SCALE GENOMIC DNA]</scope>
    <source>
        <strain>Tuebingen</strain>
    </source>
</reference>
<feature type="chain" id="PRO_0000331418" description="Solute carrier family 12 member 9">
    <location>
        <begin position="1"/>
        <end position="899"/>
    </location>
</feature>
<feature type="topological domain" description="Cytoplasmic" evidence="3">
    <location>
        <begin position="1"/>
        <end position="42"/>
    </location>
</feature>
<feature type="transmembrane region" description="Helical" evidence="3">
    <location>
        <begin position="43"/>
        <end position="63"/>
    </location>
</feature>
<feature type="topological domain" description="Extracellular" evidence="3">
    <location>
        <begin position="64"/>
        <end position="78"/>
    </location>
</feature>
<feature type="transmembrane region" description="Helical" evidence="3">
    <location>
        <begin position="79"/>
        <end position="99"/>
    </location>
</feature>
<feature type="topological domain" description="Cytoplasmic" evidence="3">
    <location>
        <begin position="100"/>
        <end position="125"/>
    </location>
</feature>
<feature type="transmembrane region" description="Helical" evidence="3">
    <location>
        <begin position="126"/>
        <end position="146"/>
    </location>
</feature>
<feature type="topological domain" description="Extracellular" evidence="3">
    <location>
        <begin position="147"/>
        <end position="175"/>
    </location>
</feature>
<feature type="transmembrane region" description="Helical" evidence="3">
    <location>
        <begin position="176"/>
        <end position="196"/>
    </location>
</feature>
<feature type="topological domain" description="Cytoplasmic" evidence="3">
    <location>
        <begin position="197"/>
        <end position="201"/>
    </location>
</feature>
<feature type="transmembrane region" description="Helical" evidence="3">
    <location>
        <begin position="202"/>
        <end position="222"/>
    </location>
</feature>
<feature type="topological domain" description="Extracellular" evidence="3">
    <location>
        <begin position="223"/>
        <end position="269"/>
    </location>
</feature>
<feature type="transmembrane region" description="Helical" evidence="3">
    <location>
        <begin position="270"/>
        <end position="290"/>
    </location>
</feature>
<feature type="topological domain" description="Cytoplasmic" evidence="3">
    <location>
        <begin position="291"/>
        <end position="306"/>
    </location>
</feature>
<feature type="transmembrane region" description="Helical" evidence="3">
    <location>
        <begin position="307"/>
        <end position="327"/>
    </location>
</feature>
<feature type="topological domain" description="Extracellular" evidence="3">
    <location>
        <begin position="328"/>
        <end position="350"/>
    </location>
</feature>
<feature type="transmembrane region" description="Helical" evidence="3">
    <location>
        <begin position="351"/>
        <end position="371"/>
    </location>
</feature>
<feature type="topological domain" description="Cytoplasmic" evidence="3">
    <location>
        <begin position="372"/>
        <end position="373"/>
    </location>
</feature>
<feature type="transmembrane region" description="Helical" evidence="3">
    <location>
        <begin position="374"/>
        <end position="394"/>
    </location>
</feature>
<feature type="topological domain" description="Extracellular" evidence="3">
    <location>
        <begin position="395"/>
        <end position="399"/>
    </location>
</feature>
<feature type="transmembrane region" description="Helical" evidence="3">
    <location>
        <begin position="400"/>
        <end position="420"/>
    </location>
</feature>
<feature type="topological domain" description="Cytoplasmic" evidence="3">
    <location>
        <position position="421"/>
    </location>
</feature>
<feature type="transmembrane region" description="Helical" evidence="3">
    <location>
        <begin position="422"/>
        <end position="442"/>
    </location>
</feature>
<feature type="topological domain" description="Extracellular" evidence="3">
    <location>
        <begin position="443"/>
        <end position="455"/>
    </location>
</feature>
<feature type="transmembrane region" description="Helical" evidence="3">
    <location>
        <begin position="456"/>
        <end position="476"/>
    </location>
</feature>
<feature type="topological domain" description="Extracellular" evidence="3">
    <location>
        <begin position="477"/>
        <end position="487"/>
    </location>
</feature>
<feature type="transmembrane region" description="Helical" evidence="3">
    <location>
        <begin position="488"/>
        <end position="510"/>
    </location>
</feature>
<feature type="topological domain" description="Cytoplasmic" evidence="3">
    <location>
        <begin position="511"/>
        <end position="563"/>
    </location>
</feature>
<feature type="transmembrane region" description="Helical" evidence="3">
    <location>
        <begin position="564"/>
        <end position="584"/>
    </location>
</feature>
<feature type="topological domain" description="Extracellular" evidence="3">
    <location>
        <begin position="585"/>
        <end position="749"/>
    </location>
</feature>
<feature type="transmembrane region" description="Helical" evidence="3">
    <location>
        <begin position="750"/>
        <end position="770"/>
    </location>
</feature>
<feature type="topological domain" description="Cytoplasmic" evidence="3">
    <location>
        <begin position="771"/>
        <end position="899"/>
    </location>
</feature>
<feature type="glycosylation site" description="N-linked (GlcNAc...) asparagine" evidence="3">
    <location>
        <position position="228"/>
    </location>
</feature>
<feature type="glycosylation site" description="N-linked (GlcNAc...) asparagine" evidence="3">
    <location>
        <position position="236"/>
    </location>
</feature>
<feature type="glycosylation site" description="N-linked (GlcNAc...) asparagine" evidence="3">
    <location>
        <position position="249"/>
    </location>
</feature>